<protein>
    <recommendedName>
        <fullName evidence="6">Stress-response A/B barrel domain-containing protein HS1</fullName>
    </recommendedName>
    <alternativeName>
        <fullName evidence="6">Pop3 family protein At3g17210</fullName>
    </alternativeName>
    <alternativeName>
        <fullName evidence="5">Protein HEAT STABLE 1</fullName>
        <shortName evidence="5">AtHS1</shortName>
    </alternativeName>
</protein>
<accession>Q9LUV2</accession>
<accession>Q0WKU8</accession>
<accession>Q8LCB1</accession>
<name>POP3_ARATH</name>
<proteinExistence type="evidence at protein level"/>
<organism>
    <name type="scientific">Arabidopsis thaliana</name>
    <name type="common">Mouse-ear cress</name>
    <dbReference type="NCBI Taxonomy" id="3702"/>
    <lineage>
        <taxon>Eukaryota</taxon>
        <taxon>Viridiplantae</taxon>
        <taxon>Streptophyta</taxon>
        <taxon>Embryophyta</taxon>
        <taxon>Tracheophyta</taxon>
        <taxon>Spermatophyta</taxon>
        <taxon>Magnoliopsida</taxon>
        <taxon>eudicotyledons</taxon>
        <taxon>Gunneridae</taxon>
        <taxon>Pentapetalae</taxon>
        <taxon>rosids</taxon>
        <taxon>malvids</taxon>
        <taxon>Brassicales</taxon>
        <taxon>Brassicaceae</taxon>
        <taxon>Camelineae</taxon>
        <taxon>Arabidopsis</taxon>
    </lineage>
</organism>
<feature type="chain" id="PRO_0000058515" description="Stress-response A/B barrel domain-containing protein HS1">
    <location>
        <begin position="1"/>
        <end position="109"/>
    </location>
</feature>
<feature type="domain" description="Stress-response A/B barrel" evidence="1">
    <location>
        <begin position="8"/>
        <end position="102"/>
    </location>
</feature>
<feature type="binding site" evidence="2 4 7 8">
    <location>
        <position position="36"/>
    </location>
    <ligand>
        <name>Mg(2+)</name>
        <dbReference type="ChEBI" id="CHEBI:18420"/>
    </ligand>
</feature>
<feature type="binding site" evidence="2 4 7 8">
    <location>
        <position position="39"/>
    </location>
    <ligand>
        <name>Mg(2+)</name>
        <dbReference type="ChEBI" id="CHEBI:18420"/>
    </ligand>
</feature>
<feature type="binding site" evidence="2 4 7 8">
    <location>
        <position position="40"/>
    </location>
    <ligand>
        <name>Mg(2+)</name>
        <dbReference type="ChEBI" id="CHEBI:18420"/>
    </ligand>
</feature>
<feature type="binding site" evidence="2 4 7 8">
    <location>
        <position position="42"/>
    </location>
    <ligand>
        <name>Mg(2+)</name>
        <dbReference type="ChEBI" id="CHEBI:18420"/>
    </ligand>
</feature>
<feature type="sequence conflict" description="In Ref. 4; AAM63750." evidence="6" ref="4">
    <original>E</original>
    <variation>K</variation>
    <location>
        <position position="85"/>
    </location>
</feature>
<feature type="strand" evidence="9">
    <location>
        <begin position="8"/>
        <end position="16"/>
    </location>
</feature>
<feature type="helix" evidence="9">
    <location>
        <begin position="22"/>
        <end position="33"/>
    </location>
</feature>
<feature type="helix" evidence="9">
    <location>
        <begin position="35"/>
        <end position="38"/>
    </location>
</feature>
<feature type="strand" evidence="9">
    <location>
        <begin position="44"/>
        <end position="49"/>
    </location>
</feature>
<feature type="strand" evidence="9">
    <location>
        <begin position="53"/>
        <end position="55"/>
    </location>
</feature>
<feature type="strand" evidence="9">
    <location>
        <begin position="62"/>
        <end position="69"/>
    </location>
</feature>
<feature type="helix" evidence="9">
    <location>
        <begin position="71"/>
        <end position="79"/>
    </location>
</feature>
<feature type="helix" evidence="9">
    <location>
        <begin position="81"/>
        <end position="92"/>
    </location>
</feature>
<feature type="strand" evidence="9">
    <location>
        <begin position="94"/>
        <end position="102"/>
    </location>
</feature>
<comment type="function">
    <text evidence="3">Heat stable protein involved in defense against fungal pathogens. Possesses antifungal activity against diverse pathogenic fungi. Possesses antimicrobial activity. Possesses ribonuclease activity.</text>
</comment>
<comment type="cofactor">
    <cofactor evidence="2 4">
        <name>Mg(2+)</name>
        <dbReference type="ChEBI" id="CHEBI:18420"/>
    </cofactor>
</comment>
<comment type="subunit">
    <text evidence="2">Homodimer.</text>
</comment>
<comment type="induction">
    <text evidence="3">By salicylic acid (SA) and jasmonic acid (JA).</text>
</comment>
<evidence type="ECO:0000255" key="1">
    <source>
        <dbReference type="PROSITE-ProRule" id="PRU00835"/>
    </source>
</evidence>
<evidence type="ECO:0000269" key="2">
    <source>
    </source>
</evidence>
<evidence type="ECO:0000269" key="3">
    <source>
    </source>
</evidence>
<evidence type="ECO:0000269" key="4">
    <source>
    </source>
</evidence>
<evidence type="ECO:0000303" key="5">
    <source>
    </source>
</evidence>
<evidence type="ECO:0000305" key="6"/>
<evidence type="ECO:0007744" key="7">
    <source>
        <dbReference type="PDB" id="1Q4R"/>
    </source>
</evidence>
<evidence type="ECO:0007744" key="8">
    <source>
        <dbReference type="PDB" id="2Q3P"/>
    </source>
</evidence>
<evidence type="ECO:0007829" key="9">
    <source>
        <dbReference type="PDB" id="1Q4R"/>
    </source>
</evidence>
<sequence>MEEAKGPVKHVLLASFKDGVSPEKIEELIKGYANLVNLIEPMKAFHWGKDVSIENLHQGYTHIFESTFESKEAVAEYIAHPAHVEFATIFLGSLDKVLVIDYKPTSVSL</sequence>
<keyword id="KW-0002">3D-structure</keyword>
<keyword id="KW-0460">Magnesium</keyword>
<keyword id="KW-0479">Metal-binding</keyword>
<keyword id="KW-0611">Plant defense</keyword>
<keyword id="KW-1185">Reference proteome</keyword>
<dbReference type="EMBL" id="AB022216">
    <property type="protein sequence ID" value="BAB02723.1"/>
    <property type="molecule type" value="Genomic_DNA"/>
</dbReference>
<dbReference type="EMBL" id="CP002686">
    <property type="protein sequence ID" value="AEE75921.1"/>
    <property type="molecule type" value="Genomic_DNA"/>
</dbReference>
<dbReference type="EMBL" id="CP002686">
    <property type="protein sequence ID" value="ANM65995.1"/>
    <property type="molecule type" value="Genomic_DNA"/>
</dbReference>
<dbReference type="EMBL" id="AF370462">
    <property type="protein sequence ID" value="AAK43839.1"/>
    <property type="molecule type" value="mRNA"/>
</dbReference>
<dbReference type="EMBL" id="AY064673">
    <property type="protein sequence ID" value="AAL47379.1"/>
    <property type="molecule type" value="mRNA"/>
</dbReference>
<dbReference type="EMBL" id="AK230465">
    <property type="protein sequence ID" value="BAF02259.1"/>
    <property type="molecule type" value="mRNA"/>
</dbReference>
<dbReference type="EMBL" id="AY086696">
    <property type="protein sequence ID" value="AAM63750.1"/>
    <property type="molecule type" value="mRNA"/>
</dbReference>
<dbReference type="RefSeq" id="NP_001319574.1">
    <property type="nucleotide sequence ID" value="NM_001338278.1"/>
</dbReference>
<dbReference type="RefSeq" id="NP_566569.1">
    <property type="nucleotide sequence ID" value="NM_112598.4"/>
</dbReference>
<dbReference type="PDB" id="1Q4R">
    <property type="method" value="X-ray"/>
    <property type="resolution" value="1.90 A"/>
    <property type="chains" value="A=1-109"/>
</dbReference>
<dbReference type="PDB" id="1Q53">
    <property type="method" value="NMR"/>
    <property type="chains" value="A/B=1-109"/>
</dbReference>
<dbReference type="PDB" id="2Q3P">
    <property type="method" value="X-ray"/>
    <property type="resolution" value="1.90 A"/>
    <property type="chains" value="A=1-109"/>
</dbReference>
<dbReference type="PDBsum" id="1Q4R"/>
<dbReference type="PDBsum" id="1Q53"/>
<dbReference type="PDBsum" id="2Q3P"/>
<dbReference type="BMRB" id="Q9LUV2"/>
<dbReference type="SMR" id="Q9LUV2"/>
<dbReference type="BioGRID" id="6313">
    <property type="interactions" value="52"/>
</dbReference>
<dbReference type="FunCoup" id="Q9LUV2">
    <property type="interactions" value="600"/>
</dbReference>
<dbReference type="IntAct" id="Q9LUV2">
    <property type="interactions" value="52"/>
</dbReference>
<dbReference type="STRING" id="3702.Q9LUV2"/>
<dbReference type="iPTMnet" id="Q9LUV2"/>
<dbReference type="PaxDb" id="3702-AT3G17210.1"/>
<dbReference type="ProteomicsDB" id="234891"/>
<dbReference type="EnsemblPlants" id="AT3G17210.1">
    <property type="protein sequence ID" value="AT3G17210.1"/>
    <property type="gene ID" value="AT3G17210"/>
</dbReference>
<dbReference type="EnsemblPlants" id="AT3G17210.2">
    <property type="protein sequence ID" value="AT3G17210.2"/>
    <property type="gene ID" value="AT3G17210"/>
</dbReference>
<dbReference type="GeneID" id="820980"/>
<dbReference type="Gramene" id="AT3G17210.1">
    <property type="protein sequence ID" value="AT3G17210.1"/>
    <property type="gene ID" value="AT3G17210"/>
</dbReference>
<dbReference type="Gramene" id="AT3G17210.2">
    <property type="protein sequence ID" value="AT3G17210.2"/>
    <property type="gene ID" value="AT3G17210"/>
</dbReference>
<dbReference type="KEGG" id="ath:AT3G17210"/>
<dbReference type="Araport" id="AT3G17210"/>
<dbReference type="TAIR" id="AT3G17210">
    <property type="gene designation" value="HS1"/>
</dbReference>
<dbReference type="eggNOG" id="ENOG502S12K">
    <property type="taxonomic scope" value="Eukaryota"/>
</dbReference>
<dbReference type="HOGENOM" id="CLU_080664_4_1_1"/>
<dbReference type="InParanoid" id="Q9LUV2"/>
<dbReference type="OMA" id="THSVLMT"/>
<dbReference type="OrthoDB" id="1601230at2759"/>
<dbReference type="PhylomeDB" id="Q9LUV2"/>
<dbReference type="EvolutionaryTrace" id="Q9LUV2"/>
<dbReference type="PRO" id="PR:Q9LUV2"/>
<dbReference type="Proteomes" id="UP000006548">
    <property type="component" value="Chromosome 3"/>
</dbReference>
<dbReference type="ExpressionAtlas" id="Q9LUV2">
    <property type="expression patterns" value="baseline and differential"/>
</dbReference>
<dbReference type="GO" id="GO:0005829">
    <property type="term" value="C:cytosol"/>
    <property type="evidence" value="ECO:0007005"/>
    <property type="project" value="TAIR"/>
</dbReference>
<dbReference type="GO" id="GO:0005886">
    <property type="term" value="C:plasma membrane"/>
    <property type="evidence" value="ECO:0007005"/>
    <property type="project" value="TAIR"/>
</dbReference>
<dbReference type="GO" id="GO:0046872">
    <property type="term" value="F:metal ion binding"/>
    <property type="evidence" value="ECO:0007669"/>
    <property type="project" value="UniProtKB-KW"/>
</dbReference>
<dbReference type="GO" id="GO:0042742">
    <property type="term" value="P:defense response to bacterium"/>
    <property type="evidence" value="ECO:0000314"/>
    <property type="project" value="TAIR"/>
</dbReference>
<dbReference type="GO" id="GO:0050832">
    <property type="term" value="P:defense response to fungus"/>
    <property type="evidence" value="ECO:0000314"/>
    <property type="project" value="TAIR"/>
</dbReference>
<dbReference type="FunFam" id="3.30.70.100:FF:000040">
    <property type="entry name" value="Stress-response A/B barrel domain-containing protein HS1"/>
    <property type="match status" value="1"/>
</dbReference>
<dbReference type="Gene3D" id="3.30.70.100">
    <property type="match status" value="1"/>
</dbReference>
<dbReference type="InterPro" id="IPR013097">
    <property type="entry name" value="Dabb"/>
</dbReference>
<dbReference type="InterPro" id="IPR011008">
    <property type="entry name" value="Dimeric_a/b-barrel"/>
</dbReference>
<dbReference type="InterPro" id="IPR044662">
    <property type="entry name" value="HS1/DABB1-like"/>
</dbReference>
<dbReference type="PANTHER" id="PTHR33178">
    <property type="match status" value="1"/>
</dbReference>
<dbReference type="PANTHER" id="PTHR33178:SF10">
    <property type="entry name" value="STRESS-RESPONSE A_B BARREL DOMAIN-CONTAINING PROTEIN"/>
    <property type="match status" value="1"/>
</dbReference>
<dbReference type="Pfam" id="PF07876">
    <property type="entry name" value="Dabb"/>
    <property type="match status" value="1"/>
</dbReference>
<dbReference type="SMART" id="SM00886">
    <property type="entry name" value="Dabb"/>
    <property type="match status" value="1"/>
</dbReference>
<dbReference type="SUPFAM" id="SSF54909">
    <property type="entry name" value="Dimeric alpha+beta barrel"/>
    <property type="match status" value="1"/>
</dbReference>
<dbReference type="PROSITE" id="PS51502">
    <property type="entry name" value="S_R_A_B_BARREL"/>
    <property type="match status" value="1"/>
</dbReference>
<gene>
    <name evidence="5" type="primary">HS1</name>
    <name type="ordered locus">At3g17210</name>
    <name type="ORF">MGD8.2</name>
</gene>
<reference key="1">
    <citation type="journal article" date="2000" name="DNA Res.">
        <title>Structural analysis of Arabidopsis thaliana chromosome 3. I. Sequence features of the regions of 4,504,864 bp covered by sixty P1 and TAC clones.</title>
        <authorList>
            <person name="Sato S."/>
            <person name="Nakamura Y."/>
            <person name="Kaneko T."/>
            <person name="Katoh T."/>
            <person name="Asamizu E."/>
            <person name="Tabata S."/>
        </authorList>
    </citation>
    <scope>NUCLEOTIDE SEQUENCE [LARGE SCALE GENOMIC DNA]</scope>
    <source>
        <strain>cv. Columbia</strain>
    </source>
</reference>
<reference key="2">
    <citation type="journal article" date="2017" name="Plant J.">
        <title>Araport11: a complete reannotation of the Arabidopsis thaliana reference genome.</title>
        <authorList>
            <person name="Cheng C.Y."/>
            <person name="Krishnakumar V."/>
            <person name="Chan A.P."/>
            <person name="Thibaud-Nissen F."/>
            <person name="Schobel S."/>
            <person name="Town C.D."/>
        </authorList>
    </citation>
    <scope>GENOME REANNOTATION</scope>
    <source>
        <strain>cv. Columbia</strain>
    </source>
</reference>
<reference key="3">
    <citation type="journal article" date="2003" name="Science">
        <title>Empirical analysis of transcriptional activity in the Arabidopsis genome.</title>
        <authorList>
            <person name="Yamada K."/>
            <person name="Lim J."/>
            <person name="Dale J.M."/>
            <person name="Chen H."/>
            <person name="Shinn P."/>
            <person name="Palm C.J."/>
            <person name="Southwick A.M."/>
            <person name="Wu H.C."/>
            <person name="Kim C.J."/>
            <person name="Nguyen M."/>
            <person name="Pham P.K."/>
            <person name="Cheuk R.F."/>
            <person name="Karlin-Newmann G."/>
            <person name="Liu S.X."/>
            <person name="Lam B."/>
            <person name="Sakano H."/>
            <person name="Wu T."/>
            <person name="Yu G."/>
            <person name="Miranda M."/>
            <person name="Quach H.L."/>
            <person name="Tripp M."/>
            <person name="Chang C.H."/>
            <person name="Lee J.M."/>
            <person name="Toriumi M.J."/>
            <person name="Chan M.M."/>
            <person name="Tang C.C."/>
            <person name="Onodera C.S."/>
            <person name="Deng J.M."/>
            <person name="Akiyama K."/>
            <person name="Ansari Y."/>
            <person name="Arakawa T."/>
            <person name="Banh J."/>
            <person name="Banno F."/>
            <person name="Bowser L."/>
            <person name="Brooks S.Y."/>
            <person name="Carninci P."/>
            <person name="Chao Q."/>
            <person name="Choy N."/>
            <person name="Enju A."/>
            <person name="Goldsmith A.D."/>
            <person name="Gurjal M."/>
            <person name="Hansen N.F."/>
            <person name="Hayashizaki Y."/>
            <person name="Johnson-Hopson C."/>
            <person name="Hsuan V.W."/>
            <person name="Iida K."/>
            <person name="Karnes M."/>
            <person name="Khan S."/>
            <person name="Koesema E."/>
            <person name="Ishida J."/>
            <person name="Jiang P.X."/>
            <person name="Jones T."/>
            <person name="Kawai J."/>
            <person name="Kamiya A."/>
            <person name="Meyers C."/>
            <person name="Nakajima M."/>
            <person name="Narusaka M."/>
            <person name="Seki M."/>
            <person name="Sakurai T."/>
            <person name="Satou M."/>
            <person name="Tamse R."/>
            <person name="Vaysberg M."/>
            <person name="Wallender E.K."/>
            <person name="Wong C."/>
            <person name="Yamamura Y."/>
            <person name="Yuan S."/>
            <person name="Shinozaki K."/>
            <person name="Davis R.W."/>
            <person name="Theologis A."/>
            <person name="Ecker J.R."/>
        </authorList>
    </citation>
    <scope>NUCLEOTIDE SEQUENCE [LARGE SCALE MRNA]</scope>
    <source>
        <strain>cv. Columbia</strain>
    </source>
</reference>
<reference key="4">
    <citation type="submission" date="2006-07" db="EMBL/GenBank/DDBJ databases">
        <title>Large-scale analysis of RIKEN Arabidopsis full-length (RAFL) cDNAs.</title>
        <authorList>
            <person name="Totoki Y."/>
            <person name="Seki M."/>
            <person name="Ishida J."/>
            <person name="Nakajima M."/>
            <person name="Enju A."/>
            <person name="Kamiya A."/>
            <person name="Narusaka M."/>
            <person name="Shin-i T."/>
            <person name="Nakagawa M."/>
            <person name="Sakamoto N."/>
            <person name="Oishi K."/>
            <person name="Kohara Y."/>
            <person name="Kobayashi M."/>
            <person name="Toyoda A."/>
            <person name="Sakaki Y."/>
            <person name="Sakurai T."/>
            <person name="Iida K."/>
            <person name="Akiyama K."/>
            <person name="Satou M."/>
            <person name="Toyoda T."/>
            <person name="Konagaya A."/>
            <person name="Carninci P."/>
            <person name="Kawai J."/>
            <person name="Hayashizaki Y."/>
            <person name="Shinozaki K."/>
        </authorList>
    </citation>
    <scope>NUCLEOTIDE SEQUENCE [LARGE SCALE MRNA]</scope>
    <source>
        <strain>cv. Columbia</strain>
    </source>
</reference>
<reference key="5">
    <citation type="submission" date="2002-03" db="EMBL/GenBank/DDBJ databases">
        <title>Full-length cDNA from Arabidopsis thaliana.</title>
        <authorList>
            <person name="Brover V.V."/>
            <person name="Troukhan M.E."/>
            <person name="Alexandrov N.A."/>
            <person name="Lu Y.-P."/>
            <person name="Flavell R.B."/>
            <person name="Feldmann K.A."/>
        </authorList>
    </citation>
    <scope>NUCLEOTIDE SEQUENCE [LARGE SCALE MRNA]</scope>
</reference>
<reference key="6">
    <citation type="journal article" date="2007" name="Biochem. Biophys. Res. Commun.">
        <title>Characterization of a heat-stable protein with antimicrobial activity from Arabidopsis thaliana.</title>
        <authorList>
            <person name="Park S.C."/>
            <person name="Lee J.R."/>
            <person name="Shin S.O."/>
            <person name="Park Y."/>
            <person name="Lee S.Y."/>
            <person name="Hahm K.S."/>
        </authorList>
    </citation>
    <scope>IDENTIFICATION BY MASS SPECTROMETRY</scope>
    <scope>FUNCTION</scope>
    <scope>INDUCTION</scope>
</reference>
<reference key="7">
    <citation type="journal article" date="2004" name="J. Biomol. NMR">
        <title>Structure of the hypothetical protein At3g17210 from Arabidopsis thaliana.</title>
        <authorList>
            <person name="Lytle B.L."/>
            <person name="Peterson F.C."/>
            <person name="Kjer K.L."/>
            <person name="Frederick R.O."/>
            <person name="Zhao Q."/>
            <person name="Thao S."/>
            <person name="Bingman C."/>
            <person name="Johnson K.A."/>
            <person name="Phillips G.N. Jr."/>
            <person name="Volkman B.F."/>
        </authorList>
    </citation>
    <scope>STRUCTURE BY NMR</scope>
</reference>
<reference key="8">
    <citation type="journal article" date="2004" name="Proteins">
        <title>Crystal structure of the protein from gene At3g17210 of Arabidopsis thaliana.</title>
        <authorList>
            <person name="Bingman C.A."/>
            <person name="Johnson K.A."/>
            <person name="Peterson F.C."/>
            <person name="Frederick R.O."/>
            <person name="Zhao Q."/>
            <person name="Thao S."/>
            <person name="Fox B.G."/>
            <person name="Volkman B.F."/>
            <person name="Jeon W.B."/>
            <person name="Smith D.W."/>
            <person name="Newman C.S."/>
            <person name="Ulrich E.L."/>
            <person name="Hegeman A."/>
            <person name="Sussman M.R."/>
            <person name="Markley J.L."/>
            <person name="Phillips G.N. Jr."/>
        </authorList>
    </citation>
    <scope>X-RAY CRYSTALLOGRAPHY (1.90 ANGSTROMS) IN COMPLEX WITH MAGNESIUM</scope>
    <scope>SUBUNIT</scope>
</reference>
<reference key="9">
    <citation type="journal article" date="2007" name="Structure">
        <title>Ensemble refinement of protein crystal structures: validation and application.</title>
        <authorList>
            <person name="Levin E.J."/>
            <person name="Kondrashov D.A."/>
            <person name="Wesenberg G.E."/>
            <person name="Phillips G.N. Jr."/>
        </authorList>
    </citation>
    <scope>X-RAY CRYSTALLOGRAPHY (1.90 ANGSTROMS) IN COMPLEX WITH MAGNESIUM</scope>
</reference>